<feature type="chain" id="PRO_1000147782" description="4-deoxy-L-threo-5-hexosulose-uronate ketol-isomerase">
    <location>
        <begin position="1"/>
        <end position="278"/>
    </location>
</feature>
<feature type="binding site" evidence="1">
    <location>
        <position position="196"/>
    </location>
    <ligand>
        <name>Zn(2+)</name>
        <dbReference type="ChEBI" id="CHEBI:29105"/>
    </ligand>
</feature>
<feature type="binding site" evidence="1">
    <location>
        <position position="198"/>
    </location>
    <ligand>
        <name>Zn(2+)</name>
        <dbReference type="ChEBI" id="CHEBI:29105"/>
    </ligand>
</feature>
<feature type="binding site" evidence="1">
    <location>
        <position position="203"/>
    </location>
    <ligand>
        <name>Zn(2+)</name>
        <dbReference type="ChEBI" id="CHEBI:29105"/>
    </ligand>
</feature>
<feature type="binding site" evidence="1">
    <location>
        <position position="245"/>
    </location>
    <ligand>
        <name>Zn(2+)</name>
        <dbReference type="ChEBI" id="CHEBI:29105"/>
    </ligand>
</feature>
<proteinExistence type="inferred from homology"/>
<sequence>MDVRQSIHSEHAKTLDTQALRREFLIENIFVADEYTMFYSHIDRIIVGGIMPVSHSVEIGGEVGKQLGVSRLLDRRELGVINIGGAGAIIVDGQRHDIGHRDALYIGKGAKELVFVSNEASRPAKFYYNCAPAHTAYPTKKVSPADVAPVTLGDNLTSNRRTINKYFVPDVLETCQLSMGLTELAPGNLWNTMPCHTHERRMEVYLYFNMEEDSCVFHMMGQPQETRHIVMRNEQAVISPSWSIHSGVGTKAYTFIWGMVGENQVFDDMDHVAVQDLR</sequence>
<gene>
    <name evidence="1" type="primary">kduI</name>
    <name type="ordered locus">SPC_3077</name>
</gene>
<dbReference type="EC" id="5.3.1.17" evidence="1"/>
<dbReference type="EMBL" id="CP000857">
    <property type="protein sequence ID" value="ACN47165.1"/>
    <property type="molecule type" value="Genomic_DNA"/>
</dbReference>
<dbReference type="RefSeq" id="WP_000383262.1">
    <property type="nucleotide sequence ID" value="NC_012125.1"/>
</dbReference>
<dbReference type="SMR" id="C0PXK7"/>
<dbReference type="KEGG" id="sei:SPC_3077"/>
<dbReference type="HOGENOM" id="CLU_062609_0_0_6"/>
<dbReference type="UniPathway" id="UPA00545">
    <property type="reaction ID" value="UER00826"/>
</dbReference>
<dbReference type="Proteomes" id="UP000001599">
    <property type="component" value="Chromosome"/>
</dbReference>
<dbReference type="GO" id="GO:0008697">
    <property type="term" value="F:4-deoxy-L-threo-5-hexosulose-uronate ketol-isomerase activity"/>
    <property type="evidence" value="ECO:0007669"/>
    <property type="project" value="UniProtKB-UniRule"/>
</dbReference>
<dbReference type="GO" id="GO:0008270">
    <property type="term" value="F:zinc ion binding"/>
    <property type="evidence" value="ECO:0007669"/>
    <property type="project" value="UniProtKB-UniRule"/>
</dbReference>
<dbReference type="GO" id="GO:0019698">
    <property type="term" value="P:D-galacturonate catabolic process"/>
    <property type="evidence" value="ECO:0007669"/>
    <property type="project" value="TreeGrafter"/>
</dbReference>
<dbReference type="GO" id="GO:0042840">
    <property type="term" value="P:D-glucuronate catabolic process"/>
    <property type="evidence" value="ECO:0007669"/>
    <property type="project" value="TreeGrafter"/>
</dbReference>
<dbReference type="GO" id="GO:0045490">
    <property type="term" value="P:pectin catabolic process"/>
    <property type="evidence" value="ECO:0007669"/>
    <property type="project" value="UniProtKB-UniRule"/>
</dbReference>
<dbReference type="CDD" id="cd20491">
    <property type="entry name" value="cupin_KduI_C"/>
    <property type="match status" value="1"/>
</dbReference>
<dbReference type="CDD" id="cd20294">
    <property type="entry name" value="cupin_KduI_N"/>
    <property type="match status" value="1"/>
</dbReference>
<dbReference type="FunFam" id="2.60.120.10:FF:000018">
    <property type="entry name" value="4-deoxy-L-threo-5-hexosulose-uronate ketol-isomerase"/>
    <property type="match status" value="1"/>
</dbReference>
<dbReference type="FunFam" id="2.60.120.520:FF:000001">
    <property type="entry name" value="4-deoxy-L-threo-5-hexosulose-uronate ketol-isomerase"/>
    <property type="match status" value="1"/>
</dbReference>
<dbReference type="Gene3D" id="2.60.120.10">
    <property type="entry name" value="Jelly Rolls"/>
    <property type="match status" value="1"/>
</dbReference>
<dbReference type="Gene3D" id="2.60.120.520">
    <property type="entry name" value="pectin degrading enzyme 5-keto 4- deoxyuronate isomerase, domain 1"/>
    <property type="match status" value="1"/>
</dbReference>
<dbReference type="HAMAP" id="MF_00687">
    <property type="entry name" value="KduI"/>
    <property type="match status" value="1"/>
</dbReference>
<dbReference type="InterPro" id="IPR007045">
    <property type="entry name" value="KduI"/>
</dbReference>
<dbReference type="InterPro" id="IPR021120">
    <property type="entry name" value="KduI/IolB_isomerase"/>
</dbReference>
<dbReference type="InterPro" id="IPR027449">
    <property type="entry name" value="KduI_N"/>
</dbReference>
<dbReference type="InterPro" id="IPR014710">
    <property type="entry name" value="RmlC-like_jellyroll"/>
</dbReference>
<dbReference type="InterPro" id="IPR011051">
    <property type="entry name" value="RmlC_Cupin_sf"/>
</dbReference>
<dbReference type="NCBIfam" id="NF002091">
    <property type="entry name" value="PRK00924.1"/>
    <property type="match status" value="1"/>
</dbReference>
<dbReference type="PANTHER" id="PTHR38461">
    <property type="entry name" value="4-DEOXY-L-THREO-5-HEXOSULOSE-URONATE KETOL-ISOMERASE"/>
    <property type="match status" value="1"/>
</dbReference>
<dbReference type="PANTHER" id="PTHR38461:SF1">
    <property type="entry name" value="4-DEOXY-L-THREO-5-HEXOSULOSE-URONATE KETOL-ISOMERASE"/>
    <property type="match status" value="1"/>
</dbReference>
<dbReference type="Pfam" id="PF04962">
    <property type="entry name" value="KduI"/>
    <property type="match status" value="1"/>
</dbReference>
<dbReference type="PIRSF" id="PIRSF006625">
    <property type="entry name" value="KduI"/>
    <property type="match status" value="1"/>
</dbReference>
<dbReference type="SUPFAM" id="SSF51182">
    <property type="entry name" value="RmlC-like cupins"/>
    <property type="match status" value="1"/>
</dbReference>
<accession>C0PXK7</accession>
<reference key="1">
    <citation type="journal article" date="2009" name="PLoS ONE">
        <title>Salmonella paratyphi C: genetic divergence from Salmonella choleraesuis and pathogenic convergence with Salmonella typhi.</title>
        <authorList>
            <person name="Liu W.-Q."/>
            <person name="Feng Y."/>
            <person name="Wang Y."/>
            <person name="Zou Q.-H."/>
            <person name="Chen F."/>
            <person name="Guo J.-T."/>
            <person name="Peng Y.-H."/>
            <person name="Jin Y."/>
            <person name="Li Y.-G."/>
            <person name="Hu S.-N."/>
            <person name="Johnston R.N."/>
            <person name="Liu G.-R."/>
            <person name="Liu S.-L."/>
        </authorList>
    </citation>
    <scope>NUCLEOTIDE SEQUENCE [LARGE SCALE GENOMIC DNA]</scope>
    <source>
        <strain>RKS4594</strain>
    </source>
</reference>
<protein>
    <recommendedName>
        <fullName evidence="1">4-deoxy-L-threo-5-hexosulose-uronate ketol-isomerase</fullName>
        <ecNumber evidence="1">5.3.1.17</ecNumber>
    </recommendedName>
    <alternativeName>
        <fullName evidence="1">5-keto-4-deoxyuronate isomerase</fullName>
    </alternativeName>
    <alternativeName>
        <fullName evidence="1">DKI isomerase</fullName>
    </alternativeName>
</protein>
<organism>
    <name type="scientific">Salmonella paratyphi C (strain RKS4594)</name>
    <dbReference type="NCBI Taxonomy" id="476213"/>
    <lineage>
        <taxon>Bacteria</taxon>
        <taxon>Pseudomonadati</taxon>
        <taxon>Pseudomonadota</taxon>
        <taxon>Gammaproteobacteria</taxon>
        <taxon>Enterobacterales</taxon>
        <taxon>Enterobacteriaceae</taxon>
        <taxon>Salmonella</taxon>
    </lineage>
</organism>
<evidence type="ECO:0000255" key="1">
    <source>
        <dbReference type="HAMAP-Rule" id="MF_00687"/>
    </source>
</evidence>
<name>KDUI_SALPC</name>
<comment type="function">
    <text evidence="1">Catalyzes the isomerization of 5-dehydro-4-deoxy-D-glucuronate to 3-deoxy-D-glycero-2,5-hexodiulosonate.</text>
</comment>
<comment type="catalytic activity">
    <reaction evidence="1">
        <text>5-dehydro-4-deoxy-D-glucuronate = 3-deoxy-D-glycero-2,5-hexodiulosonate</text>
        <dbReference type="Rhea" id="RHEA:23896"/>
        <dbReference type="ChEBI" id="CHEBI:17117"/>
        <dbReference type="ChEBI" id="CHEBI:29071"/>
        <dbReference type="EC" id="5.3.1.17"/>
    </reaction>
</comment>
<comment type="cofactor">
    <cofactor evidence="1">
        <name>Zn(2+)</name>
        <dbReference type="ChEBI" id="CHEBI:29105"/>
    </cofactor>
    <text evidence="1">Binds 1 zinc ion per subunit.</text>
</comment>
<comment type="pathway">
    <text evidence="1">Glycan metabolism; pectin degradation; 2-dehydro-3-deoxy-D-gluconate from pectin: step 4/5.</text>
</comment>
<comment type="similarity">
    <text evidence="1">Belongs to the KduI family.</text>
</comment>
<keyword id="KW-0413">Isomerase</keyword>
<keyword id="KW-0479">Metal-binding</keyword>
<keyword id="KW-0862">Zinc</keyword>